<proteinExistence type="predicted"/>
<organism>
    <name type="scientific">Bacillus subtilis (strain 168)</name>
    <dbReference type="NCBI Taxonomy" id="224308"/>
    <lineage>
        <taxon>Bacteria</taxon>
        <taxon>Bacillati</taxon>
        <taxon>Bacillota</taxon>
        <taxon>Bacilli</taxon>
        <taxon>Bacillales</taxon>
        <taxon>Bacillaceae</taxon>
        <taxon>Bacillus</taxon>
    </lineage>
</organism>
<protein>
    <recommendedName>
        <fullName>Spore coat polysaccharide biosynthesis protein SpsG</fullName>
    </recommendedName>
</protein>
<reference key="1">
    <citation type="journal article" date="1993" name="Mol. Microbiol.">
        <title>Bacillus subtilis genome project: cloning and sequencing of the 97 kb region from 325 degrees to 333 degrees.</title>
        <authorList>
            <person name="Glaser P."/>
            <person name="Kunst F."/>
            <person name="Arnaud M."/>
            <person name="Coudart M.P."/>
            <person name="Gonzales W."/>
            <person name="Hullo M.-F."/>
            <person name="Ionescu M."/>
            <person name="Lubochinsky B."/>
            <person name="Marcelino L."/>
            <person name="Moszer I."/>
            <person name="Presecan E."/>
            <person name="Santana M."/>
            <person name="Schneider E."/>
            <person name="Schweizer J."/>
            <person name="Vertes A."/>
            <person name="Rapoport G."/>
            <person name="Danchin A."/>
        </authorList>
    </citation>
    <scope>NUCLEOTIDE SEQUENCE [GENOMIC DNA]</scope>
    <source>
        <strain>168</strain>
    </source>
</reference>
<reference key="2">
    <citation type="journal article" date="1997" name="Nature">
        <title>The complete genome sequence of the Gram-positive bacterium Bacillus subtilis.</title>
        <authorList>
            <person name="Kunst F."/>
            <person name="Ogasawara N."/>
            <person name="Moszer I."/>
            <person name="Albertini A.M."/>
            <person name="Alloni G."/>
            <person name="Azevedo V."/>
            <person name="Bertero M.G."/>
            <person name="Bessieres P."/>
            <person name="Bolotin A."/>
            <person name="Borchert S."/>
            <person name="Borriss R."/>
            <person name="Boursier L."/>
            <person name="Brans A."/>
            <person name="Braun M."/>
            <person name="Brignell S.C."/>
            <person name="Bron S."/>
            <person name="Brouillet S."/>
            <person name="Bruschi C.V."/>
            <person name="Caldwell B."/>
            <person name="Capuano V."/>
            <person name="Carter N.M."/>
            <person name="Choi S.-K."/>
            <person name="Codani J.-J."/>
            <person name="Connerton I.F."/>
            <person name="Cummings N.J."/>
            <person name="Daniel R.A."/>
            <person name="Denizot F."/>
            <person name="Devine K.M."/>
            <person name="Duesterhoeft A."/>
            <person name="Ehrlich S.D."/>
            <person name="Emmerson P.T."/>
            <person name="Entian K.-D."/>
            <person name="Errington J."/>
            <person name="Fabret C."/>
            <person name="Ferrari E."/>
            <person name="Foulger D."/>
            <person name="Fritz C."/>
            <person name="Fujita M."/>
            <person name="Fujita Y."/>
            <person name="Fuma S."/>
            <person name="Galizzi A."/>
            <person name="Galleron N."/>
            <person name="Ghim S.-Y."/>
            <person name="Glaser P."/>
            <person name="Goffeau A."/>
            <person name="Golightly E.J."/>
            <person name="Grandi G."/>
            <person name="Guiseppi G."/>
            <person name="Guy B.J."/>
            <person name="Haga K."/>
            <person name="Haiech J."/>
            <person name="Harwood C.R."/>
            <person name="Henaut A."/>
            <person name="Hilbert H."/>
            <person name="Holsappel S."/>
            <person name="Hosono S."/>
            <person name="Hullo M.-F."/>
            <person name="Itaya M."/>
            <person name="Jones L.-M."/>
            <person name="Joris B."/>
            <person name="Karamata D."/>
            <person name="Kasahara Y."/>
            <person name="Klaerr-Blanchard M."/>
            <person name="Klein C."/>
            <person name="Kobayashi Y."/>
            <person name="Koetter P."/>
            <person name="Koningstein G."/>
            <person name="Krogh S."/>
            <person name="Kumano M."/>
            <person name="Kurita K."/>
            <person name="Lapidus A."/>
            <person name="Lardinois S."/>
            <person name="Lauber J."/>
            <person name="Lazarevic V."/>
            <person name="Lee S.-M."/>
            <person name="Levine A."/>
            <person name="Liu H."/>
            <person name="Masuda S."/>
            <person name="Mauel C."/>
            <person name="Medigue C."/>
            <person name="Medina N."/>
            <person name="Mellado R.P."/>
            <person name="Mizuno M."/>
            <person name="Moestl D."/>
            <person name="Nakai S."/>
            <person name="Noback M."/>
            <person name="Noone D."/>
            <person name="O'Reilly M."/>
            <person name="Ogawa K."/>
            <person name="Ogiwara A."/>
            <person name="Oudega B."/>
            <person name="Park S.-H."/>
            <person name="Parro V."/>
            <person name="Pohl T.M."/>
            <person name="Portetelle D."/>
            <person name="Porwollik S."/>
            <person name="Prescott A.M."/>
            <person name="Presecan E."/>
            <person name="Pujic P."/>
            <person name="Purnelle B."/>
            <person name="Rapoport G."/>
            <person name="Rey M."/>
            <person name="Reynolds S."/>
            <person name="Rieger M."/>
            <person name="Rivolta C."/>
            <person name="Rocha E."/>
            <person name="Roche B."/>
            <person name="Rose M."/>
            <person name="Sadaie Y."/>
            <person name="Sato T."/>
            <person name="Scanlan E."/>
            <person name="Schleich S."/>
            <person name="Schroeter R."/>
            <person name="Scoffone F."/>
            <person name="Sekiguchi J."/>
            <person name="Sekowska A."/>
            <person name="Seror S.J."/>
            <person name="Serror P."/>
            <person name="Shin B.-S."/>
            <person name="Soldo B."/>
            <person name="Sorokin A."/>
            <person name="Tacconi E."/>
            <person name="Takagi T."/>
            <person name="Takahashi H."/>
            <person name="Takemaru K."/>
            <person name="Takeuchi M."/>
            <person name="Tamakoshi A."/>
            <person name="Tanaka T."/>
            <person name="Terpstra P."/>
            <person name="Tognoni A."/>
            <person name="Tosato V."/>
            <person name="Uchiyama S."/>
            <person name="Vandenbol M."/>
            <person name="Vannier F."/>
            <person name="Vassarotti A."/>
            <person name="Viari A."/>
            <person name="Wambutt R."/>
            <person name="Wedler E."/>
            <person name="Wedler H."/>
            <person name="Weitzenegger T."/>
            <person name="Winters P."/>
            <person name="Wipat A."/>
            <person name="Yamamoto H."/>
            <person name="Yamane K."/>
            <person name="Yasumoto K."/>
            <person name="Yata K."/>
            <person name="Yoshida K."/>
            <person name="Yoshikawa H.-F."/>
            <person name="Zumstein E."/>
            <person name="Yoshikawa H."/>
            <person name="Danchin A."/>
        </authorList>
    </citation>
    <scope>NUCLEOTIDE SEQUENCE [LARGE SCALE GENOMIC DNA]</scope>
    <source>
        <strain>168</strain>
    </source>
</reference>
<gene>
    <name type="primary">spsG</name>
    <name type="synonym">spsH</name>
    <name type="ordered locus">BSU37850</name>
    <name type="ORF">ipa-69d/ipa-70d</name>
</gene>
<keyword id="KW-1003">Cell membrane</keyword>
<keyword id="KW-0472">Membrane</keyword>
<keyword id="KW-1185">Reference proteome</keyword>
<keyword id="KW-0812">Transmembrane</keyword>
<keyword id="KW-1133">Transmembrane helix</keyword>
<evidence type="ECO:0000255" key="1"/>
<evidence type="ECO:0000305" key="2"/>
<name>SPSG_BACSU</name>
<dbReference type="EMBL" id="X73124">
    <property type="protein sequence ID" value="CAA51625.1"/>
    <property type="status" value="ALT_FRAME"/>
    <property type="molecule type" value="Genomic_DNA"/>
</dbReference>
<dbReference type="EMBL" id="X73124">
    <property type="protein sequence ID" value="CAA51626.1"/>
    <property type="status" value="ALT_FRAME"/>
    <property type="molecule type" value="Genomic_DNA"/>
</dbReference>
<dbReference type="EMBL" id="AL009126">
    <property type="protein sequence ID" value="CAB15811.1"/>
    <property type="molecule type" value="Genomic_DNA"/>
</dbReference>
<dbReference type="PIR" id="E69717">
    <property type="entry name" value="E69717"/>
</dbReference>
<dbReference type="RefSeq" id="NP_391664.1">
    <property type="nucleotide sequence ID" value="NC_000964.3"/>
</dbReference>
<dbReference type="RefSeq" id="WP_003244190.1">
    <property type="nucleotide sequence ID" value="NZ_OZ025638.1"/>
</dbReference>
<dbReference type="SMR" id="P39627"/>
<dbReference type="FunCoup" id="P39627">
    <property type="interactions" value="31"/>
</dbReference>
<dbReference type="STRING" id="224308.BSU37850"/>
<dbReference type="PaxDb" id="224308-BSU37850"/>
<dbReference type="DNASU" id="937230"/>
<dbReference type="EnsemblBacteria" id="CAB15811">
    <property type="protein sequence ID" value="CAB15811"/>
    <property type="gene ID" value="BSU_37850"/>
</dbReference>
<dbReference type="GeneID" id="937230"/>
<dbReference type="KEGG" id="bsu:BSU37850"/>
<dbReference type="PATRIC" id="fig|224308.179.peg.4098"/>
<dbReference type="eggNOG" id="COG3980">
    <property type="taxonomic scope" value="Bacteria"/>
</dbReference>
<dbReference type="InParanoid" id="P39627"/>
<dbReference type="OrthoDB" id="9805604at2"/>
<dbReference type="BioCyc" id="BSUB:BSU37850-MONOMER"/>
<dbReference type="UniPathway" id="UPA00953"/>
<dbReference type="Proteomes" id="UP000001570">
    <property type="component" value="Chromosome"/>
</dbReference>
<dbReference type="GO" id="GO:0005886">
    <property type="term" value="C:plasma membrane"/>
    <property type="evidence" value="ECO:0007669"/>
    <property type="project" value="UniProtKB-SubCell"/>
</dbReference>
<dbReference type="GO" id="GO:0016757">
    <property type="term" value="F:glycosyltransferase activity"/>
    <property type="evidence" value="ECO:0000318"/>
    <property type="project" value="GO_Central"/>
</dbReference>
<dbReference type="GO" id="GO:0016758">
    <property type="term" value="F:hexosyltransferase activity"/>
    <property type="evidence" value="ECO:0007669"/>
    <property type="project" value="InterPro"/>
</dbReference>
<dbReference type="Gene3D" id="3.40.50.11190">
    <property type="match status" value="1"/>
</dbReference>
<dbReference type="Gene3D" id="3.40.50.2000">
    <property type="entry name" value="Glycogen Phosphorylase B"/>
    <property type="match status" value="1"/>
</dbReference>
<dbReference type="InterPro" id="IPR007235">
    <property type="entry name" value="Glyco_trans_28_C"/>
</dbReference>
<dbReference type="PANTHER" id="PTHR21015:SF22">
    <property type="entry name" value="GLYCOSYLTRANSFERASE"/>
    <property type="match status" value="1"/>
</dbReference>
<dbReference type="PANTHER" id="PTHR21015">
    <property type="entry name" value="UDP-N-ACETYLGLUCOSAMINE--N-ACETYLMURAMYL-(PENTAPEPTIDE) PYROPHOSPHORYL-UNDECAPRENOL N-ACETYLGLUCOSAMINE TRANSFERASE 1"/>
    <property type="match status" value="1"/>
</dbReference>
<dbReference type="Pfam" id="PF04101">
    <property type="entry name" value="Glyco_tran_28_C"/>
    <property type="match status" value="1"/>
</dbReference>
<dbReference type="SUPFAM" id="SSF53756">
    <property type="entry name" value="UDP-Glycosyltransferase/glycogen phosphorylase"/>
    <property type="match status" value="1"/>
</dbReference>
<comment type="pathway">
    <text>Spore coat biogenesis; spore coat polysaccharide biosynthesis.</text>
</comment>
<comment type="subcellular location">
    <subcellularLocation>
        <location evidence="2">Cell membrane</location>
    </subcellularLocation>
</comment>
<comment type="similarity">
    <text evidence="2">To M.jannaschii MJ1062.</text>
</comment>
<comment type="sequence caution" evidence="2">
    <conflict type="frameshift">
        <sequence resource="EMBL-CDS" id="CAA51626"/>
    </conflict>
</comment>
<accession>P39627</accession>
<accession>P39628</accession>
<feature type="chain" id="PRO_0000072158" description="Spore coat polysaccharide biosynthesis protein SpsG">
    <location>
        <begin position="1"/>
        <end position="339"/>
    </location>
</feature>
<feature type="transmembrane region" description="Helical" evidence="1">
    <location>
        <begin position="241"/>
        <end position="261"/>
    </location>
</feature>
<sequence length="339" mass="37975">MHVGIFADGGYEKGMGHVVRMKRLAEGLKQRCLITFYTNQDSEAFLHEEHWQVIVKPELQQHEFILREIKSKKLDLLLFDILGAPAELLKKIKTETDAKIVLFEEKNGKSIQYSDAVINGIYGDIRSRVYVQGNTRIYEGPDYLILHPAFQAAREDYTLKKDCRNILVALGGSDPKQLIFKVLAAADQVPDIKDKNMMFVMGSASPHQEAVRRRIEKKPQYKMIEQTNDMAGLMKQADAAIVAGGISLYEAICIGVPCLVLSQVEHQTATAKTFADQGAALDLGLGELVPDETLIYQMSRIMSSYPLRLSLHKGGRPLVDGKGIIRVTAILQDLYEQEI</sequence>